<accession>Q3K0S9</accession>
<accession>Q93TJ3</accession>
<accession>Q9S0S8</accession>
<organism>
    <name type="scientific">Streptococcus agalactiae serotype Ia (strain ATCC 27591 / A909 / CDC SS700)</name>
    <dbReference type="NCBI Taxonomy" id="205921"/>
    <lineage>
        <taxon>Bacteria</taxon>
        <taxon>Bacillati</taxon>
        <taxon>Bacillota</taxon>
        <taxon>Bacilli</taxon>
        <taxon>Lactobacillales</taxon>
        <taxon>Streptococcaceae</taxon>
        <taxon>Streptococcus</taxon>
    </lineage>
</organism>
<name>CPSC_STRA1</name>
<protein>
    <recommendedName>
        <fullName>Capsular polysaccharide biosynthesis protein CpsC</fullName>
    </recommendedName>
</protein>
<sequence length="230" mass="25185">MNKIANTEVEINIFNLLKKLWKKKFLITFVAIAFATAGLFYSLFIVTPQYTSSTRIYVINPNTPNNSITAQDLQAGSFLANDYKEIITSTDVLEKVISSEKLNYPSSQLLQKITVSILKDTRVISISVEDANPKMSQKLANSVREAAVSKIKAVTQVEDITTLEKGNLPKAPSSPNIKKNVLIGFIVGAGLSTIVLVIMGILDDRVNTEEDIEKALGLTSLGIVPDLNKL</sequence>
<evidence type="ECO:0000250" key="1"/>
<evidence type="ECO:0000255" key="2"/>
<evidence type="ECO:0000269" key="3">
    <source>
    </source>
</evidence>
<evidence type="ECO:0000305" key="4"/>
<feature type="chain" id="PRO_0000217229" description="Capsular polysaccharide biosynthesis protein CpsC">
    <location>
        <begin position="1"/>
        <end position="230"/>
    </location>
</feature>
<feature type="transmembrane region" description="Helical" evidence="2">
    <location>
        <begin position="25"/>
        <end position="45"/>
    </location>
</feature>
<feature type="transmembrane region" description="Helical" evidence="2">
    <location>
        <begin position="181"/>
        <end position="201"/>
    </location>
</feature>
<feature type="sequence conflict" description="In Ref. 1; BAA82277." evidence="4" ref="1">
    <original>T</original>
    <variation>I</variation>
    <location>
        <position position="51"/>
    </location>
</feature>
<keyword id="KW-0972">Capsule biogenesis/degradation</keyword>
<keyword id="KW-1003">Cell membrane</keyword>
<keyword id="KW-0270">Exopolysaccharide synthesis</keyword>
<keyword id="KW-0472">Membrane</keyword>
<keyword id="KW-0812">Transmembrane</keyword>
<keyword id="KW-1133">Transmembrane helix</keyword>
<reference key="1">
    <citation type="journal article" date="1999" name="J. Bacteriol.">
        <title>Molecular characterization of type-specific capsular polysaccharide biosynthesis genes of Streptococcus agalactiae type Ia.</title>
        <authorList>
            <person name="Yamamoto S."/>
            <person name="Miyake K."/>
            <person name="Koike Y."/>
            <person name="Watanabe M."/>
            <person name="Machida Y."/>
            <person name="Ohta M."/>
            <person name="Iijima S."/>
        </authorList>
    </citation>
    <scope>NUCLEOTIDE SEQUENCE [GENOMIC DNA]</scope>
    <source>
        <strain>OI1 / Serotype Ia</strain>
    </source>
</reference>
<reference key="2">
    <citation type="journal article" date="2005" name="Proc. Natl. Acad. Sci. U.S.A.">
        <title>Genome analysis of multiple pathogenic isolates of Streptococcus agalactiae: implications for the microbial 'pan-genome'.</title>
        <authorList>
            <person name="Tettelin H."/>
            <person name="Masignani V."/>
            <person name="Cieslewicz M.J."/>
            <person name="Donati C."/>
            <person name="Medini D."/>
            <person name="Ward N.L."/>
            <person name="Angiuoli S.V."/>
            <person name="Crabtree J."/>
            <person name="Jones A.L."/>
            <person name="Durkin A.S."/>
            <person name="DeBoy R.T."/>
            <person name="Davidsen T.M."/>
            <person name="Mora M."/>
            <person name="Scarselli M."/>
            <person name="Margarit y Ros I."/>
            <person name="Peterson J.D."/>
            <person name="Hauser C.R."/>
            <person name="Sundaram J.P."/>
            <person name="Nelson W.C."/>
            <person name="Madupu R."/>
            <person name="Brinkac L.M."/>
            <person name="Dodson R.J."/>
            <person name="Rosovitz M.J."/>
            <person name="Sullivan S.A."/>
            <person name="Daugherty S.C."/>
            <person name="Haft D.H."/>
            <person name="Selengut J."/>
            <person name="Gwinn M.L."/>
            <person name="Zhou L."/>
            <person name="Zafar N."/>
            <person name="Khouri H."/>
            <person name="Radune D."/>
            <person name="Dimitrov G."/>
            <person name="Watkins K."/>
            <person name="O'Connor K.J."/>
            <person name="Smith S."/>
            <person name="Utterback T.R."/>
            <person name="White O."/>
            <person name="Rubens C.E."/>
            <person name="Grandi G."/>
            <person name="Madoff L.C."/>
            <person name="Kasper D.L."/>
            <person name="Telford J.L."/>
            <person name="Wessels M.R."/>
            <person name="Rappuoli R."/>
            <person name="Fraser C.M."/>
        </authorList>
    </citation>
    <scope>NUCLEOTIDE SEQUENCE [LARGE SCALE GENOMIC DNA]</scope>
    <source>
        <strain>ATCC 27591 / A909 / CDC SS700</strain>
    </source>
</reference>
<reference key="3">
    <citation type="journal article" date="2001" name="J. Biol. Chem.">
        <title>Functional analysis in type Ia group B Streptococcus of a cluster of genes involved in extracellular polysaccharide production by diverse species of Streptococci.</title>
        <authorList>
            <person name="Cieslewicz M.J."/>
            <person name="Kasper D.L."/>
            <person name="Wang Y."/>
            <person name="Wessels M.R."/>
        </authorList>
    </citation>
    <scope>FUNCTION</scope>
    <source>
        <strain>515 / Serotype Ia</strain>
    </source>
</reference>
<gene>
    <name type="primary">cpsC</name>
    <name type="synonym">cpsIaC</name>
    <name type="ordered locus">SAK_1260</name>
</gene>
<proteinExistence type="inferred from homology"/>
<comment type="function">
    <text evidence="1 3">Required for CpsD phosphorylation (By similarity). Involved in the regulation of capsular polysaccharide biosynthesis. May be part of a complex that directs the coordinated polymerization and export to the cell surface of the capsular polysaccharide.</text>
</comment>
<comment type="pathway">
    <text>Capsule biogenesis; capsule polysaccharide biosynthesis.</text>
</comment>
<comment type="subcellular location">
    <subcellularLocation>
        <location evidence="4">Cell membrane</location>
        <topology evidence="4">Multi-pass membrane protein</topology>
    </subcellularLocation>
</comment>
<comment type="similarity">
    <text evidence="4">Belongs to the CpsC/CapA family.</text>
</comment>
<dbReference type="EMBL" id="AB028896">
    <property type="protein sequence ID" value="BAA82277.1"/>
    <property type="molecule type" value="Genomic_DNA"/>
</dbReference>
<dbReference type="EMBL" id="CP000114">
    <property type="protein sequence ID" value="ABA45263.1"/>
    <property type="molecule type" value="Genomic_DNA"/>
</dbReference>
<dbReference type="RefSeq" id="WP_001033072.1">
    <property type="nucleotide sequence ID" value="NC_007432.1"/>
</dbReference>
<dbReference type="SMR" id="Q3K0S9"/>
<dbReference type="KEGG" id="sak:SAK_1260"/>
<dbReference type="HOGENOM" id="CLU_082668_0_1_9"/>
<dbReference type="UniPathway" id="UPA00934"/>
<dbReference type="GO" id="GO:0005886">
    <property type="term" value="C:plasma membrane"/>
    <property type="evidence" value="ECO:0007669"/>
    <property type="project" value="UniProtKB-SubCell"/>
</dbReference>
<dbReference type="GO" id="GO:0004713">
    <property type="term" value="F:protein tyrosine kinase activity"/>
    <property type="evidence" value="ECO:0007669"/>
    <property type="project" value="TreeGrafter"/>
</dbReference>
<dbReference type="GO" id="GO:0045227">
    <property type="term" value="P:capsule polysaccharide biosynthetic process"/>
    <property type="evidence" value="ECO:0007669"/>
    <property type="project" value="UniProtKB-UniPathway"/>
</dbReference>
<dbReference type="InterPro" id="IPR050445">
    <property type="entry name" value="Bact_polysacc_biosynth/exp"/>
</dbReference>
<dbReference type="InterPro" id="IPR003856">
    <property type="entry name" value="LPS_length_determ_N_term"/>
</dbReference>
<dbReference type="PANTHER" id="PTHR32309:SF13">
    <property type="entry name" value="FERRIC ENTEROBACTIN TRANSPORT PROTEIN FEPE"/>
    <property type="match status" value="1"/>
</dbReference>
<dbReference type="PANTHER" id="PTHR32309">
    <property type="entry name" value="TYROSINE-PROTEIN KINASE"/>
    <property type="match status" value="1"/>
</dbReference>
<dbReference type="Pfam" id="PF02706">
    <property type="entry name" value="Wzz"/>
    <property type="match status" value="1"/>
</dbReference>